<dbReference type="EMBL" id="CP000283">
    <property type="protein sequence ID" value="ABE40399.1"/>
    <property type="molecule type" value="Genomic_DNA"/>
</dbReference>
<dbReference type="SMR" id="Q134U0"/>
<dbReference type="STRING" id="316057.RPD_3173"/>
<dbReference type="KEGG" id="rpd:RPD_3173"/>
<dbReference type="eggNOG" id="COG0198">
    <property type="taxonomic scope" value="Bacteria"/>
</dbReference>
<dbReference type="HOGENOM" id="CLU_093315_2_2_5"/>
<dbReference type="BioCyc" id="RPAL316057:RPD_RS15930-MONOMER"/>
<dbReference type="Proteomes" id="UP000001818">
    <property type="component" value="Chromosome"/>
</dbReference>
<dbReference type="GO" id="GO:1990904">
    <property type="term" value="C:ribonucleoprotein complex"/>
    <property type="evidence" value="ECO:0007669"/>
    <property type="project" value="UniProtKB-KW"/>
</dbReference>
<dbReference type="GO" id="GO:0005840">
    <property type="term" value="C:ribosome"/>
    <property type="evidence" value="ECO:0007669"/>
    <property type="project" value="UniProtKB-KW"/>
</dbReference>
<dbReference type="GO" id="GO:0019843">
    <property type="term" value="F:rRNA binding"/>
    <property type="evidence" value="ECO:0007669"/>
    <property type="project" value="UniProtKB-UniRule"/>
</dbReference>
<dbReference type="GO" id="GO:0003735">
    <property type="term" value="F:structural constituent of ribosome"/>
    <property type="evidence" value="ECO:0007669"/>
    <property type="project" value="InterPro"/>
</dbReference>
<dbReference type="GO" id="GO:0006412">
    <property type="term" value="P:translation"/>
    <property type="evidence" value="ECO:0007669"/>
    <property type="project" value="UniProtKB-UniRule"/>
</dbReference>
<dbReference type="CDD" id="cd06089">
    <property type="entry name" value="KOW_RPL26"/>
    <property type="match status" value="1"/>
</dbReference>
<dbReference type="FunFam" id="2.30.30.30:FF:000051">
    <property type="entry name" value="50S ribosomal protein L24"/>
    <property type="match status" value="1"/>
</dbReference>
<dbReference type="Gene3D" id="2.30.30.30">
    <property type="match status" value="1"/>
</dbReference>
<dbReference type="HAMAP" id="MF_01326_B">
    <property type="entry name" value="Ribosomal_uL24_B"/>
    <property type="match status" value="1"/>
</dbReference>
<dbReference type="InterPro" id="IPR005824">
    <property type="entry name" value="KOW"/>
</dbReference>
<dbReference type="InterPro" id="IPR014722">
    <property type="entry name" value="Rib_uL2_dom2"/>
</dbReference>
<dbReference type="InterPro" id="IPR003256">
    <property type="entry name" value="Ribosomal_uL24"/>
</dbReference>
<dbReference type="InterPro" id="IPR005825">
    <property type="entry name" value="Ribosomal_uL24_CS"/>
</dbReference>
<dbReference type="InterPro" id="IPR041988">
    <property type="entry name" value="Ribosomal_uL24_KOW"/>
</dbReference>
<dbReference type="InterPro" id="IPR008991">
    <property type="entry name" value="Translation_prot_SH3-like_sf"/>
</dbReference>
<dbReference type="NCBIfam" id="TIGR01079">
    <property type="entry name" value="rplX_bact"/>
    <property type="match status" value="1"/>
</dbReference>
<dbReference type="PANTHER" id="PTHR12903">
    <property type="entry name" value="MITOCHONDRIAL RIBOSOMAL PROTEIN L24"/>
    <property type="match status" value="1"/>
</dbReference>
<dbReference type="Pfam" id="PF00467">
    <property type="entry name" value="KOW"/>
    <property type="match status" value="1"/>
</dbReference>
<dbReference type="Pfam" id="PF17136">
    <property type="entry name" value="ribosomal_L24"/>
    <property type="match status" value="1"/>
</dbReference>
<dbReference type="SMART" id="SM00739">
    <property type="entry name" value="KOW"/>
    <property type="match status" value="1"/>
</dbReference>
<dbReference type="SUPFAM" id="SSF50104">
    <property type="entry name" value="Translation proteins SH3-like domain"/>
    <property type="match status" value="1"/>
</dbReference>
<dbReference type="PROSITE" id="PS01108">
    <property type="entry name" value="RIBOSOMAL_L24"/>
    <property type="match status" value="1"/>
</dbReference>
<reference key="1">
    <citation type="submission" date="2006-03" db="EMBL/GenBank/DDBJ databases">
        <title>Complete sequence of Rhodopseudomonas palustris BisB5.</title>
        <authorList>
            <consortium name="US DOE Joint Genome Institute"/>
            <person name="Copeland A."/>
            <person name="Lucas S."/>
            <person name="Lapidus A."/>
            <person name="Barry K."/>
            <person name="Detter J.C."/>
            <person name="Glavina del Rio T."/>
            <person name="Hammon N."/>
            <person name="Israni S."/>
            <person name="Dalin E."/>
            <person name="Tice H."/>
            <person name="Pitluck S."/>
            <person name="Chain P."/>
            <person name="Malfatti S."/>
            <person name="Shin M."/>
            <person name="Vergez L."/>
            <person name="Schmutz J."/>
            <person name="Larimer F."/>
            <person name="Land M."/>
            <person name="Hauser L."/>
            <person name="Pelletier D.A."/>
            <person name="Kyrpides N."/>
            <person name="Lykidis A."/>
            <person name="Oda Y."/>
            <person name="Harwood C.S."/>
            <person name="Richardson P."/>
        </authorList>
    </citation>
    <scope>NUCLEOTIDE SEQUENCE [LARGE SCALE GENOMIC DNA]</scope>
    <source>
        <strain>BisB5</strain>
    </source>
</reference>
<sequence length="104" mass="11158">MAAKIRKGDKVIVLSGRDKGRTGEVFEVRPDADVALVRGINMIKRHQKQTQTQEGGIISKEAPIHLSNIAIVGKDGKPTRVGFKVLADGKKVRIAKSSGAEIDG</sequence>
<comment type="function">
    <text evidence="1">One of two assembly initiator proteins, it binds directly to the 5'-end of the 23S rRNA, where it nucleates assembly of the 50S subunit.</text>
</comment>
<comment type="function">
    <text evidence="1">One of the proteins that surrounds the polypeptide exit tunnel on the outside of the subunit.</text>
</comment>
<comment type="subunit">
    <text evidence="1">Part of the 50S ribosomal subunit.</text>
</comment>
<comment type="similarity">
    <text evidence="1">Belongs to the universal ribosomal protein uL24 family.</text>
</comment>
<name>RL24_RHOPS</name>
<gene>
    <name evidence="1" type="primary">rplX</name>
    <name type="ordered locus">RPD_3173</name>
</gene>
<keyword id="KW-0687">Ribonucleoprotein</keyword>
<keyword id="KW-0689">Ribosomal protein</keyword>
<keyword id="KW-0694">RNA-binding</keyword>
<keyword id="KW-0699">rRNA-binding</keyword>
<proteinExistence type="inferred from homology"/>
<protein>
    <recommendedName>
        <fullName evidence="1">Large ribosomal subunit protein uL24</fullName>
    </recommendedName>
    <alternativeName>
        <fullName evidence="2">50S ribosomal protein L24</fullName>
    </alternativeName>
</protein>
<organism>
    <name type="scientific">Rhodopseudomonas palustris (strain BisB5)</name>
    <dbReference type="NCBI Taxonomy" id="316057"/>
    <lineage>
        <taxon>Bacteria</taxon>
        <taxon>Pseudomonadati</taxon>
        <taxon>Pseudomonadota</taxon>
        <taxon>Alphaproteobacteria</taxon>
        <taxon>Hyphomicrobiales</taxon>
        <taxon>Nitrobacteraceae</taxon>
        <taxon>Rhodopseudomonas</taxon>
    </lineage>
</organism>
<accession>Q134U0</accession>
<evidence type="ECO:0000255" key="1">
    <source>
        <dbReference type="HAMAP-Rule" id="MF_01326"/>
    </source>
</evidence>
<evidence type="ECO:0000305" key="2"/>
<feature type="chain" id="PRO_1000052291" description="Large ribosomal subunit protein uL24">
    <location>
        <begin position="1"/>
        <end position="104"/>
    </location>
</feature>